<name>SDHF2_CANGA</name>
<accession>Q6FQ93</accession>
<feature type="chain" id="PRO_0000383190" description="Succinate dehydrogenase assembly factor 2, mitochondrial">
    <location>
        <begin position="1"/>
        <end position="153"/>
    </location>
</feature>
<evidence type="ECO:0000255" key="1">
    <source>
        <dbReference type="HAMAP-Rule" id="MF_03057"/>
    </source>
</evidence>
<dbReference type="EMBL" id="CR380955">
    <property type="protein sequence ID" value="CAG60538.1"/>
    <property type="molecule type" value="Genomic_DNA"/>
</dbReference>
<dbReference type="RefSeq" id="XP_447601.1">
    <property type="nucleotide sequence ID" value="XM_447601.1"/>
</dbReference>
<dbReference type="SMR" id="Q6FQ93"/>
<dbReference type="FunCoup" id="Q6FQ93">
    <property type="interactions" value="346"/>
</dbReference>
<dbReference type="STRING" id="284593.Q6FQ93"/>
<dbReference type="EnsemblFungi" id="CAGL0I08085g-T">
    <property type="protein sequence ID" value="CAGL0I08085g-T-p1"/>
    <property type="gene ID" value="CAGL0I08085g"/>
</dbReference>
<dbReference type="KEGG" id="cgr:2889290"/>
<dbReference type="CGD" id="CAL0130464">
    <property type="gene designation" value="CAGL0I08085g"/>
</dbReference>
<dbReference type="VEuPathDB" id="FungiDB:B1J91_I08085g"/>
<dbReference type="VEuPathDB" id="FungiDB:CAGL0I08085g"/>
<dbReference type="eggNOG" id="KOG3326">
    <property type="taxonomic scope" value="Eukaryota"/>
</dbReference>
<dbReference type="HOGENOM" id="CLU_103054_0_1_1"/>
<dbReference type="InParanoid" id="Q6FQ93"/>
<dbReference type="OMA" id="YGKPQNP"/>
<dbReference type="Proteomes" id="UP000002428">
    <property type="component" value="Chromosome I"/>
</dbReference>
<dbReference type="GO" id="GO:0005759">
    <property type="term" value="C:mitochondrial matrix"/>
    <property type="evidence" value="ECO:0000250"/>
    <property type="project" value="UniProtKB"/>
</dbReference>
<dbReference type="GO" id="GO:0006121">
    <property type="term" value="P:mitochondrial electron transport, succinate to ubiquinone"/>
    <property type="evidence" value="ECO:0000250"/>
    <property type="project" value="UniProtKB"/>
</dbReference>
<dbReference type="GO" id="GO:0034553">
    <property type="term" value="P:mitochondrial respiratory chain complex II assembly"/>
    <property type="evidence" value="ECO:0007669"/>
    <property type="project" value="EnsemblFungi"/>
</dbReference>
<dbReference type="GO" id="GO:0018293">
    <property type="term" value="P:protein-FAD linkage"/>
    <property type="evidence" value="ECO:0000250"/>
    <property type="project" value="UniProtKB"/>
</dbReference>
<dbReference type="GO" id="GO:0006099">
    <property type="term" value="P:tricarboxylic acid cycle"/>
    <property type="evidence" value="ECO:0007669"/>
    <property type="project" value="EnsemblFungi"/>
</dbReference>
<dbReference type="FunFam" id="1.10.150.250:FF:000002">
    <property type="entry name" value="Succinate dehydrogenase assembly factor 2, mitochondrial"/>
    <property type="match status" value="1"/>
</dbReference>
<dbReference type="Gene3D" id="1.10.150.250">
    <property type="entry name" value="Flavinator of succinate dehydrogenase"/>
    <property type="match status" value="1"/>
</dbReference>
<dbReference type="HAMAP" id="MF_03057">
    <property type="entry name" value="SDHAF2"/>
    <property type="match status" value="1"/>
</dbReference>
<dbReference type="InterPro" id="IPR005631">
    <property type="entry name" value="SDH"/>
</dbReference>
<dbReference type="InterPro" id="IPR036714">
    <property type="entry name" value="SDH_sf"/>
</dbReference>
<dbReference type="InterPro" id="IPR028882">
    <property type="entry name" value="SDHAF2"/>
</dbReference>
<dbReference type="PANTHER" id="PTHR12469">
    <property type="entry name" value="PROTEIN EMI5 HOMOLOG, MITOCHONDRIAL"/>
    <property type="match status" value="1"/>
</dbReference>
<dbReference type="PANTHER" id="PTHR12469:SF2">
    <property type="entry name" value="SUCCINATE DEHYDROGENASE ASSEMBLY FACTOR 2, MITOCHONDRIAL"/>
    <property type="match status" value="1"/>
</dbReference>
<dbReference type="Pfam" id="PF03937">
    <property type="entry name" value="Sdh5"/>
    <property type="match status" value="1"/>
</dbReference>
<dbReference type="SUPFAM" id="SSF109910">
    <property type="entry name" value="YgfY-like"/>
    <property type="match status" value="1"/>
</dbReference>
<sequence>MLRITYKLPIALRQQAFVARKLVPTIKANYSTNSDDDVVSRIKVHPIKRINESIDKKRARLIYQSRKRGILETDLLLSGFAAKHLRSMTNEELDEYDALLNELDWDIYYWVTKNYKTSPVPERWKNSEILKKLQDFSENKEKKILRMPDLENY</sequence>
<protein>
    <recommendedName>
        <fullName evidence="1">Succinate dehydrogenase assembly factor 2, mitochondrial</fullName>
        <shortName evidence="1">SDH assembly factor 2</shortName>
        <shortName evidence="1">SDHAF2</shortName>
    </recommendedName>
</protein>
<gene>
    <name type="ordered locus">CAGL0I08085g</name>
</gene>
<proteinExistence type="inferred from homology"/>
<organism>
    <name type="scientific">Candida glabrata (strain ATCC 2001 / BCRC 20586 / JCM 3761 / NBRC 0622 / NRRL Y-65 / CBS 138)</name>
    <name type="common">Yeast</name>
    <name type="synonym">Nakaseomyces glabratus</name>
    <dbReference type="NCBI Taxonomy" id="284593"/>
    <lineage>
        <taxon>Eukaryota</taxon>
        <taxon>Fungi</taxon>
        <taxon>Dikarya</taxon>
        <taxon>Ascomycota</taxon>
        <taxon>Saccharomycotina</taxon>
        <taxon>Saccharomycetes</taxon>
        <taxon>Saccharomycetales</taxon>
        <taxon>Saccharomycetaceae</taxon>
        <taxon>Nakaseomyces</taxon>
    </lineage>
</organism>
<keyword id="KW-0143">Chaperone</keyword>
<keyword id="KW-0496">Mitochondrion</keyword>
<keyword id="KW-1185">Reference proteome</keyword>
<reference key="1">
    <citation type="journal article" date="2004" name="Nature">
        <title>Genome evolution in yeasts.</title>
        <authorList>
            <person name="Dujon B."/>
            <person name="Sherman D."/>
            <person name="Fischer G."/>
            <person name="Durrens P."/>
            <person name="Casaregola S."/>
            <person name="Lafontaine I."/>
            <person name="de Montigny J."/>
            <person name="Marck C."/>
            <person name="Neuveglise C."/>
            <person name="Talla E."/>
            <person name="Goffard N."/>
            <person name="Frangeul L."/>
            <person name="Aigle M."/>
            <person name="Anthouard V."/>
            <person name="Babour A."/>
            <person name="Barbe V."/>
            <person name="Barnay S."/>
            <person name="Blanchin S."/>
            <person name="Beckerich J.-M."/>
            <person name="Beyne E."/>
            <person name="Bleykasten C."/>
            <person name="Boisrame A."/>
            <person name="Boyer J."/>
            <person name="Cattolico L."/>
            <person name="Confanioleri F."/>
            <person name="de Daruvar A."/>
            <person name="Despons L."/>
            <person name="Fabre E."/>
            <person name="Fairhead C."/>
            <person name="Ferry-Dumazet H."/>
            <person name="Groppi A."/>
            <person name="Hantraye F."/>
            <person name="Hennequin C."/>
            <person name="Jauniaux N."/>
            <person name="Joyet P."/>
            <person name="Kachouri R."/>
            <person name="Kerrest A."/>
            <person name="Koszul R."/>
            <person name="Lemaire M."/>
            <person name="Lesur I."/>
            <person name="Ma L."/>
            <person name="Muller H."/>
            <person name="Nicaud J.-M."/>
            <person name="Nikolski M."/>
            <person name="Oztas S."/>
            <person name="Ozier-Kalogeropoulos O."/>
            <person name="Pellenz S."/>
            <person name="Potier S."/>
            <person name="Richard G.-F."/>
            <person name="Straub M.-L."/>
            <person name="Suleau A."/>
            <person name="Swennen D."/>
            <person name="Tekaia F."/>
            <person name="Wesolowski-Louvel M."/>
            <person name="Westhof E."/>
            <person name="Wirth B."/>
            <person name="Zeniou-Meyer M."/>
            <person name="Zivanovic Y."/>
            <person name="Bolotin-Fukuhara M."/>
            <person name="Thierry A."/>
            <person name="Bouchier C."/>
            <person name="Caudron B."/>
            <person name="Scarpelli C."/>
            <person name="Gaillardin C."/>
            <person name="Weissenbach J."/>
            <person name="Wincker P."/>
            <person name="Souciet J.-L."/>
        </authorList>
    </citation>
    <scope>NUCLEOTIDE SEQUENCE [LARGE SCALE GENOMIC DNA]</scope>
    <source>
        <strain>ATCC 2001 / BCRC 20586 / JCM 3761 / NBRC 0622 / NRRL Y-65 / CBS 138</strain>
    </source>
</reference>
<comment type="function">
    <text evidence="1">Plays an essential role in the assembly of succinate dehydrogenase (SDH), an enzyme complex (also referred to as respiratory complex II) that is a component of both the tricarboxylic acid (TCA) cycle and the mitochondrial electron transport chain, and which couples the oxidation of succinate to fumarate with the reduction of ubiquinone (coenzyme Q) to ubiquinol. Required for flavinylation (covalent attachment of FAD) of the flavoprotein subunit of the SDH catalytic dimer.</text>
</comment>
<comment type="subunit">
    <text evidence="1">Interacts with the flavoprotein subunit within the SDH catalytic dimer.</text>
</comment>
<comment type="subcellular location">
    <subcellularLocation>
        <location evidence="1">Mitochondrion matrix</location>
    </subcellularLocation>
</comment>
<comment type="miscellaneous">
    <text evidence="1">This protein may be expected to contain an N-terminal transit peptide but none has been predicted.</text>
</comment>
<comment type="similarity">
    <text evidence="1">Belongs to the SDHAF2 family.</text>
</comment>